<sequence>MSKQPSLAQLKQDLADIADLNDSRLASLAADSRKGAQLLLKQIQHRLAKAEAAEQAFQARLHYERPFWARGERVAGIDEVGRGPLAGPVVTSAVILPPDFDIPLVNDSKQLTAKERERLYPLILAQAQSVSIGIGSPALIDQINIYQATRVAMQRAVLGLGLAPQQLIVDAMQIPVDVPQIRLIKGDAKSASVAAASIVAKVYRDHLMATYDELYPGYGFAQNAGYGTAEHLQGLADRGVTPIHRRTFSPVQKILQA</sequence>
<comment type="function">
    <text evidence="1">Endonuclease that specifically degrades the RNA of RNA-DNA hybrids.</text>
</comment>
<comment type="catalytic activity">
    <reaction evidence="1">
        <text>Endonucleolytic cleavage to 5'-phosphomonoester.</text>
        <dbReference type="EC" id="3.1.26.4"/>
    </reaction>
</comment>
<comment type="cofactor">
    <cofactor evidence="1">
        <name>Mn(2+)</name>
        <dbReference type="ChEBI" id="CHEBI:29035"/>
    </cofactor>
    <cofactor evidence="1">
        <name>Mg(2+)</name>
        <dbReference type="ChEBI" id="CHEBI:18420"/>
    </cofactor>
    <text evidence="1">Manganese or magnesium. Binds 1 divalent metal ion per monomer in the absence of substrate. May bind a second metal ion after substrate binding.</text>
</comment>
<comment type="subcellular location">
    <subcellularLocation>
        <location evidence="1">Cytoplasm</location>
    </subcellularLocation>
</comment>
<comment type="similarity">
    <text evidence="1">Belongs to the RNase HII family.</text>
</comment>
<proteinExistence type="inferred from homology"/>
<protein>
    <recommendedName>
        <fullName evidence="1">Ribonuclease HII</fullName>
        <shortName evidence="1">RNase HII</shortName>
        <ecNumber evidence="1">3.1.26.4</ecNumber>
    </recommendedName>
</protein>
<feature type="chain" id="PRO_1000031153" description="Ribonuclease HII">
    <location>
        <begin position="1"/>
        <end position="257"/>
    </location>
</feature>
<feature type="domain" description="RNase H type-2" evidence="2">
    <location>
        <begin position="72"/>
        <end position="257"/>
    </location>
</feature>
<feature type="binding site" evidence="1">
    <location>
        <position position="78"/>
    </location>
    <ligand>
        <name>a divalent metal cation</name>
        <dbReference type="ChEBI" id="CHEBI:60240"/>
    </ligand>
</feature>
<feature type="binding site" evidence="1">
    <location>
        <position position="79"/>
    </location>
    <ligand>
        <name>a divalent metal cation</name>
        <dbReference type="ChEBI" id="CHEBI:60240"/>
    </ligand>
</feature>
<feature type="binding site" evidence="1">
    <location>
        <position position="170"/>
    </location>
    <ligand>
        <name>a divalent metal cation</name>
        <dbReference type="ChEBI" id="CHEBI:60240"/>
    </ligand>
</feature>
<accession>Q03S83</accession>
<gene>
    <name evidence="1" type="primary">rnhB</name>
    <name type="ordered locus">LVIS_0796</name>
</gene>
<name>RNH2_LEVBA</name>
<keyword id="KW-0963">Cytoplasm</keyword>
<keyword id="KW-0255">Endonuclease</keyword>
<keyword id="KW-0378">Hydrolase</keyword>
<keyword id="KW-0464">Manganese</keyword>
<keyword id="KW-0479">Metal-binding</keyword>
<keyword id="KW-0540">Nuclease</keyword>
<keyword id="KW-1185">Reference proteome</keyword>
<dbReference type="EC" id="3.1.26.4" evidence="1"/>
<dbReference type="EMBL" id="CP000416">
    <property type="protein sequence ID" value="ABJ63939.1"/>
    <property type="molecule type" value="Genomic_DNA"/>
</dbReference>
<dbReference type="RefSeq" id="WP_011667570.1">
    <property type="nucleotide sequence ID" value="NC_008497.1"/>
</dbReference>
<dbReference type="SMR" id="Q03S83"/>
<dbReference type="STRING" id="387344.LVIS_0796"/>
<dbReference type="KEGG" id="lbr:LVIS_0796"/>
<dbReference type="PATRIC" id="fig|387344.15.peg.769"/>
<dbReference type="eggNOG" id="COG0164">
    <property type="taxonomic scope" value="Bacteria"/>
</dbReference>
<dbReference type="HOGENOM" id="CLU_036532_2_1_9"/>
<dbReference type="Proteomes" id="UP000001652">
    <property type="component" value="Chromosome"/>
</dbReference>
<dbReference type="GO" id="GO:0005737">
    <property type="term" value="C:cytoplasm"/>
    <property type="evidence" value="ECO:0007669"/>
    <property type="project" value="UniProtKB-SubCell"/>
</dbReference>
<dbReference type="GO" id="GO:0032299">
    <property type="term" value="C:ribonuclease H2 complex"/>
    <property type="evidence" value="ECO:0007669"/>
    <property type="project" value="TreeGrafter"/>
</dbReference>
<dbReference type="GO" id="GO:0030145">
    <property type="term" value="F:manganese ion binding"/>
    <property type="evidence" value="ECO:0007669"/>
    <property type="project" value="UniProtKB-UniRule"/>
</dbReference>
<dbReference type="GO" id="GO:0003723">
    <property type="term" value="F:RNA binding"/>
    <property type="evidence" value="ECO:0007669"/>
    <property type="project" value="InterPro"/>
</dbReference>
<dbReference type="GO" id="GO:0004523">
    <property type="term" value="F:RNA-DNA hybrid ribonuclease activity"/>
    <property type="evidence" value="ECO:0007669"/>
    <property type="project" value="UniProtKB-UniRule"/>
</dbReference>
<dbReference type="GO" id="GO:0043137">
    <property type="term" value="P:DNA replication, removal of RNA primer"/>
    <property type="evidence" value="ECO:0007669"/>
    <property type="project" value="TreeGrafter"/>
</dbReference>
<dbReference type="GO" id="GO:0006298">
    <property type="term" value="P:mismatch repair"/>
    <property type="evidence" value="ECO:0007669"/>
    <property type="project" value="TreeGrafter"/>
</dbReference>
<dbReference type="CDD" id="cd07182">
    <property type="entry name" value="RNase_HII_bacteria_HII_like"/>
    <property type="match status" value="1"/>
</dbReference>
<dbReference type="FunFam" id="3.30.420.10:FF:000006">
    <property type="entry name" value="Ribonuclease HII"/>
    <property type="match status" value="1"/>
</dbReference>
<dbReference type="Gene3D" id="3.30.420.10">
    <property type="entry name" value="Ribonuclease H-like superfamily/Ribonuclease H"/>
    <property type="match status" value="1"/>
</dbReference>
<dbReference type="HAMAP" id="MF_00052_B">
    <property type="entry name" value="RNase_HII_B"/>
    <property type="match status" value="1"/>
</dbReference>
<dbReference type="InterPro" id="IPR022898">
    <property type="entry name" value="RNase_HII"/>
</dbReference>
<dbReference type="InterPro" id="IPR001352">
    <property type="entry name" value="RNase_HII/HIII"/>
</dbReference>
<dbReference type="InterPro" id="IPR024567">
    <property type="entry name" value="RNase_HII/HIII_dom"/>
</dbReference>
<dbReference type="InterPro" id="IPR012337">
    <property type="entry name" value="RNaseH-like_sf"/>
</dbReference>
<dbReference type="InterPro" id="IPR036397">
    <property type="entry name" value="RNaseH_sf"/>
</dbReference>
<dbReference type="NCBIfam" id="NF000594">
    <property type="entry name" value="PRK00015.1-1"/>
    <property type="match status" value="1"/>
</dbReference>
<dbReference type="NCBIfam" id="NF000595">
    <property type="entry name" value="PRK00015.1-3"/>
    <property type="match status" value="1"/>
</dbReference>
<dbReference type="PANTHER" id="PTHR10954">
    <property type="entry name" value="RIBONUCLEASE H2 SUBUNIT A"/>
    <property type="match status" value="1"/>
</dbReference>
<dbReference type="PANTHER" id="PTHR10954:SF18">
    <property type="entry name" value="RIBONUCLEASE HII"/>
    <property type="match status" value="1"/>
</dbReference>
<dbReference type="Pfam" id="PF01351">
    <property type="entry name" value="RNase_HII"/>
    <property type="match status" value="1"/>
</dbReference>
<dbReference type="SUPFAM" id="SSF53098">
    <property type="entry name" value="Ribonuclease H-like"/>
    <property type="match status" value="1"/>
</dbReference>
<dbReference type="PROSITE" id="PS51975">
    <property type="entry name" value="RNASE_H_2"/>
    <property type="match status" value="1"/>
</dbReference>
<reference key="1">
    <citation type="journal article" date="2006" name="Proc. Natl. Acad. Sci. U.S.A.">
        <title>Comparative genomics of the lactic acid bacteria.</title>
        <authorList>
            <person name="Makarova K.S."/>
            <person name="Slesarev A."/>
            <person name="Wolf Y.I."/>
            <person name="Sorokin A."/>
            <person name="Mirkin B."/>
            <person name="Koonin E.V."/>
            <person name="Pavlov A."/>
            <person name="Pavlova N."/>
            <person name="Karamychev V."/>
            <person name="Polouchine N."/>
            <person name="Shakhova V."/>
            <person name="Grigoriev I."/>
            <person name="Lou Y."/>
            <person name="Rohksar D."/>
            <person name="Lucas S."/>
            <person name="Huang K."/>
            <person name="Goodstein D.M."/>
            <person name="Hawkins T."/>
            <person name="Plengvidhya V."/>
            <person name="Welker D."/>
            <person name="Hughes J."/>
            <person name="Goh Y."/>
            <person name="Benson A."/>
            <person name="Baldwin K."/>
            <person name="Lee J.-H."/>
            <person name="Diaz-Muniz I."/>
            <person name="Dosti B."/>
            <person name="Smeianov V."/>
            <person name="Wechter W."/>
            <person name="Barabote R."/>
            <person name="Lorca G."/>
            <person name="Altermann E."/>
            <person name="Barrangou R."/>
            <person name="Ganesan B."/>
            <person name="Xie Y."/>
            <person name="Rawsthorne H."/>
            <person name="Tamir D."/>
            <person name="Parker C."/>
            <person name="Breidt F."/>
            <person name="Broadbent J.R."/>
            <person name="Hutkins R."/>
            <person name="O'Sullivan D."/>
            <person name="Steele J."/>
            <person name="Unlu G."/>
            <person name="Saier M.H. Jr."/>
            <person name="Klaenhammer T."/>
            <person name="Richardson P."/>
            <person name="Kozyavkin S."/>
            <person name="Weimer B.C."/>
            <person name="Mills D.A."/>
        </authorList>
    </citation>
    <scope>NUCLEOTIDE SEQUENCE [LARGE SCALE GENOMIC DNA]</scope>
    <source>
        <strain>ATCC 367 / BCRC 12310 / CIP 105137 / JCM 1170 / LMG 11437 / NCIMB 947 / NCTC 947</strain>
    </source>
</reference>
<evidence type="ECO:0000255" key="1">
    <source>
        <dbReference type="HAMAP-Rule" id="MF_00052"/>
    </source>
</evidence>
<evidence type="ECO:0000255" key="2">
    <source>
        <dbReference type="PROSITE-ProRule" id="PRU01319"/>
    </source>
</evidence>
<organism>
    <name type="scientific">Levilactobacillus brevis (strain ATCC 367 / BCRC 12310 / CIP 105137 / JCM 1170 / LMG 11437 / NCIMB 947 / NCTC 947)</name>
    <name type="common">Lactobacillus brevis</name>
    <dbReference type="NCBI Taxonomy" id="387344"/>
    <lineage>
        <taxon>Bacteria</taxon>
        <taxon>Bacillati</taxon>
        <taxon>Bacillota</taxon>
        <taxon>Bacilli</taxon>
        <taxon>Lactobacillales</taxon>
        <taxon>Lactobacillaceae</taxon>
        <taxon>Levilactobacillus</taxon>
    </lineage>
</organism>